<organism>
    <name type="scientific">Azotobacter vinelandii (strain DJ / ATCC BAA-1303)</name>
    <dbReference type="NCBI Taxonomy" id="322710"/>
    <lineage>
        <taxon>Bacteria</taxon>
        <taxon>Pseudomonadati</taxon>
        <taxon>Pseudomonadota</taxon>
        <taxon>Gammaproteobacteria</taxon>
        <taxon>Pseudomonadales</taxon>
        <taxon>Pseudomonadaceae</taxon>
        <taxon>Azotobacter</taxon>
    </lineage>
</organism>
<name>KDSA_AZOVD</name>
<comment type="catalytic activity">
    <reaction evidence="1">
        <text>D-arabinose 5-phosphate + phosphoenolpyruvate + H2O = 3-deoxy-alpha-D-manno-2-octulosonate-8-phosphate + phosphate</text>
        <dbReference type="Rhea" id="RHEA:14053"/>
        <dbReference type="ChEBI" id="CHEBI:15377"/>
        <dbReference type="ChEBI" id="CHEBI:43474"/>
        <dbReference type="ChEBI" id="CHEBI:57693"/>
        <dbReference type="ChEBI" id="CHEBI:58702"/>
        <dbReference type="ChEBI" id="CHEBI:85985"/>
        <dbReference type="EC" id="2.5.1.55"/>
    </reaction>
</comment>
<comment type="pathway">
    <text evidence="1">Carbohydrate biosynthesis; 3-deoxy-D-manno-octulosonate biosynthesis; 3-deoxy-D-manno-octulosonate from D-ribulose 5-phosphate: step 2/3.</text>
</comment>
<comment type="pathway">
    <text evidence="1">Bacterial outer membrane biogenesis; lipopolysaccharide biosynthesis.</text>
</comment>
<comment type="subcellular location">
    <subcellularLocation>
        <location evidence="1">Cytoplasm</location>
    </subcellularLocation>
</comment>
<comment type="similarity">
    <text evidence="1">Belongs to the KdsA family.</text>
</comment>
<accession>C1DSS7</accession>
<feature type="chain" id="PRO_1000202331" description="2-dehydro-3-deoxyphosphooctonate aldolase">
    <location>
        <begin position="1"/>
        <end position="281"/>
    </location>
</feature>
<keyword id="KW-0963">Cytoplasm</keyword>
<keyword id="KW-0448">Lipopolysaccharide biosynthesis</keyword>
<keyword id="KW-0808">Transferase</keyword>
<proteinExistence type="inferred from homology"/>
<gene>
    <name evidence="1" type="primary">kdsA</name>
    <name type="ordered locus">Avin_38800</name>
</gene>
<dbReference type="EC" id="2.5.1.55" evidence="1"/>
<dbReference type="EMBL" id="CP001157">
    <property type="protein sequence ID" value="ACO80020.1"/>
    <property type="molecule type" value="Genomic_DNA"/>
</dbReference>
<dbReference type="RefSeq" id="WP_012702395.1">
    <property type="nucleotide sequence ID" value="NC_012560.1"/>
</dbReference>
<dbReference type="SMR" id="C1DSS7"/>
<dbReference type="STRING" id="322710.Avin_38800"/>
<dbReference type="EnsemblBacteria" id="ACO80020">
    <property type="protein sequence ID" value="ACO80020"/>
    <property type="gene ID" value="Avin_38800"/>
</dbReference>
<dbReference type="GeneID" id="88186838"/>
<dbReference type="KEGG" id="avn:Avin_38800"/>
<dbReference type="eggNOG" id="COG2877">
    <property type="taxonomic scope" value="Bacteria"/>
</dbReference>
<dbReference type="HOGENOM" id="CLU_036666_0_0_6"/>
<dbReference type="OrthoDB" id="9776934at2"/>
<dbReference type="UniPathway" id="UPA00030"/>
<dbReference type="UniPathway" id="UPA00357">
    <property type="reaction ID" value="UER00474"/>
</dbReference>
<dbReference type="Proteomes" id="UP000002424">
    <property type="component" value="Chromosome"/>
</dbReference>
<dbReference type="GO" id="GO:0005737">
    <property type="term" value="C:cytoplasm"/>
    <property type="evidence" value="ECO:0007669"/>
    <property type="project" value="UniProtKB-SubCell"/>
</dbReference>
<dbReference type="GO" id="GO:0008676">
    <property type="term" value="F:3-deoxy-8-phosphooctulonate synthase activity"/>
    <property type="evidence" value="ECO:0007669"/>
    <property type="project" value="UniProtKB-UniRule"/>
</dbReference>
<dbReference type="GO" id="GO:0019294">
    <property type="term" value="P:keto-3-deoxy-D-manno-octulosonic acid biosynthetic process"/>
    <property type="evidence" value="ECO:0007669"/>
    <property type="project" value="UniProtKB-UniRule"/>
</dbReference>
<dbReference type="Gene3D" id="3.20.20.70">
    <property type="entry name" value="Aldolase class I"/>
    <property type="match status" value="1"/>
</dbReference>
<dbReference type="HAMAP" id="MF_00056">
    <property type="entry name" value="KDO8P_synth"/>
    <property type="match status" value="1"/>
</dbReference>
<dbReference type="InterPro" id="IPR013785">
    <property type="entry name" value="Aldolase_TIM"/>
</dbReference>
<dbReference type="InterPro" id="IPR006218">
    <property type="entry name" value="DAHP1/KDSA"/>
</dbReference>
<dbReference type="InterPro" id="IPR006269">
    <property type="entry name" value="KDO8P_synthase"/>
</dbReference>
<dbReference type="NCBIfam" id="TIGR01362">
    <property type="entry name" value="KDO8P_synth"/>
    <property type="match status" value="1"/>
</dbReference>
<dbReference type="NCBIfam" id="NF003543">
    <property type="entry name" value="PRK05198.1"/>
    <property type="match status" value="1"/>
</dbReference>
<dbReference type="NCBIfam" id="NF009109">
    <property type="entry name" value="PRK12457.1"/>
    <property type="match status" value="1"/>
</dbReference>
<dbReference type="PANTHER" id="PTHR21057">
    <property type="entry name" value="PHOSPHO-2-DEHYDRO-3-DEOXYHEPTONATE ALDOLASE"/>
    <property type="match status" value="1"/>
</dbReference>
<dbReference type="Pfam" id="PF00793">
    <property type="entry name" value="DAHP_synth_1"/>
    <property type="match status" value="1"/>
</dbReference>
<dbReference type="SUPFAM" id="SSF51569">
    <property type="entry name" value="Aldolase"/>
    <property type="match status" value="1"/>
</dbReference>
<reference key="1">
    <citation type="journal article" date="2009" name="J. Bacteriol.">
        <title>Genome sequence of Azotobacter vinelandii, an obligate aerobe specialized to support diverse anaerobic metabolic processes.</title>
        <authorList>
            <person name="Setubal J.C."/>
            <person name="Dos Santos P."/>
            <person name="Goldman B.S."/>
            <person name="Ertesvaag H."/>
            <person name="Espin G."/>
            <person name="Rubio L.M."/>
            <person name="Valla S."/>
            <person name="Almeida N.F."/>
            <person name="Balasubramanian D."/>
            <person name="Cromes L."/>
            <person name="Curatti L."/>
            <person name="Du Z."/>
            <person name="Godsy E."/>
            <person name="Goodner B."/>
            <person name="Hellner-Burris K."/>
            <person name="Hernandez J.A."/>
            <person name="Houmiel K."/>
            <person name="Imperial J."/>
            <person name="Kennedy C."/>
            <person name="Larson T.J."/>
            <person name="Latreille P."/>
            <person name="Ligon L.S."/>
            <person name="Lu J."/>
            <person name="Maerk M."/>
            <person name="Miller N.M."/>
            <person name="Norton S."/>
            <person name="O'Carroll I.P."/>
            <person name="Paulsen I."/>
            <person name="Raulfs E.C."/>
            <person name="Roemer R."/>
            <person name="Rosser J."/>
            <person name="Segura D."/>
            <person name="Slater S."/>
            <person name="Stricklin S.L."/>
            <person name="Studholme D.J."/>
            <person name="Sun J."/>
            <person name="Viana C.J."/>
            <person name="Wallin E."/>
            <person name="Wang B."/>
            <person name="Wheeler C."/>
            <person name="Zhu H."/>
            <person name="Dean D.R."/>
            <person name="Dixon R."/>
            <person name="Wood D."/>
        </authorList>
    </citation>
    <scope>NUCLEOTIDE SEQUENCE [LARGE SCALE GENOMIC DNA]</scope>
    <source>
        <strain>DJ / ATCC BAA-1303</strain>
    </source>
</reference>
<protein>
    <recommendedName>
        <fullName evidence="1">2-dehydro-3-deoxyphosphooctonate aldolase</fullName>
        <ecNumber evidence="1">2.5.1.55</ecNumber>
    </recommendedName>
    <alternativeName>
        <fullName evidence="1">3-deoxy-D-manno-octulosonic acid 8-phosphate synthase</fullName>
    </alternativeName>
    <alternativeName>
        <fullName evidence="1">KDO-8-phosphate synthase</fullName>
        <shortName evidence="1">KDO 8-P synthase</shortName>
        <shortName evidence="1">KDOPS</shortName>
    </alternativeName>
    <alternativeName>
        <fullName evidence="1">Phospho-2-dehydro-3-deoxyoctonate aldolase</fullName>
    </alternativeName>
</protein>
<sequence>MTQKTIRVGDIEIANDRPMALFGGMNVLESRDLALRVCEEYVRVTGKLGIPYVFKASFDKANRSSITSFRGPGLEEGMRIFEEVKKAFGVPVLTDVHEPWQAAPVAEVCDILQLPAFLSRQTDLVVAMAKTSAVINIKKAQFLAPQEMQHILRKCEEAGNDQLILCERGTSFGYNNLVVDMLGFGIMKQFEYPVFFDVTHALQMPGGRADSAGGRRAQVTDLAKAGISQGLAGLFLEAHPDPDNAKCDGPCALRLDKLEPFLAQLAQLDALVKKFPPIETA</sequence>
<evidence type="ECO:0000255" key="1">
    <source>
        <dbReference type="HAMAP-Rule" id="MF_00056"/>
    </source>
</evidence>